<proteinExistence type="inferred from homology"/>
<dbReference type="EC" id="3.4.23.36" evidence="1"/>
<dbReference type="EMBL" id="CP000524">
    <property type="protein sequence ID" value="ABM44739.1"/>
    <property type="molecule type" value="Genomic_DNA"/>
</dbReference>
<dbReference type="RefSeq" id="WP_005768206.1">
    <property type="nucleotide sequence ID" value="NC_008783.1"/>
</dbReference>
<dbReference type="SMR" id="A1UUG9"/>
<dbReference type="STRING" id="360095.BARBAKC583_1375"/>
<dbReference type="GeneID" id="4683883"/>
<dbReference type="KEGG" id="bbk:BARBAKC583_1375"/>
<dbReference type="PATRIC" id="fig|360095.6.peg.1349"/>
<dbReference type="eggNOG" id="COG0597">
    <property type="taxonomic scope" value="Bacteria"/>
</dbReference>
<dbReference type="HOGENOM" id="CLU_083252_4_3_5"/>
<dbReference type="OrthoDB" id="9810259at2"/>
<dbReference type="UniPathway" id="UPA00665"/>
<dbReference type="Proteomes" id="UP000000643">
    <property type="component" value="Chromosome"/>
</dbReference>
<dbReference type="GO" id="GO:0005886">
    <property type="term" value="C:plasma membrane"/>
    <property type="evidence" value="ECO:0007669"/>
    <property type="project" value="UniProtKB-SubCell"/>
</dbReference>
<dbReference type="GO" id="GO:0004190">
    <property type="term" value="F:aspartic-type endopeptidase activity"/>
    <property type="evidence" value="ECO:0007669"/>
    <property type="project" value="UniProtKB-UniRule"/>
</dbReference>
<dbReference type="GO" id="GO:0006508">
    <property type="term" value="P:proteolysis"/>
    <property type="evidence" value="ECO:0007669"/>
    <property type="project" value="UniProtKB-KW"/>
</dbReference>
<dbReference type="HAMAP" id="MF_00161">
    <property type="entry name" value="LspA"/>
    <property type="match status" value="1"/>
</dbReference>
<dbReference type="InterPro" id="IPR001872">
    <property type="entry name" value="Peptidase_A8"/>
</dbReference>
<dbReference type="NCBIfam" id="TIGR00077">
    <property type="entry name" value="lspA"/>
    <property type="match status" value="1"/>
</dbReference>
<dbReference type="PANTHER" id="PTHR33695">
    <property type="entry name" value="LIPOPROTEIN SIGNAL PEPTIDASE"/>
    <property type="match status" value="1"/>
</dbReference>
<dbReference type="PANTHER" id="PTHR33695:SF1">
    <property type="entry name" value="LIPOPROTEIN SIGNAL PEPTIDASE"/>
    <property type="match status" value="1"/>
</dbReference>
<dbReference type="Pfam" id="PF01252">
    <property type="entry name" value="Peptidase_A8"/>
    <property type="match status" value="1"/>
</dbReference>
<dbReference type="PRINTS" id="PR00781">
    <property type="entry name" value="LIPOSIGPTASE"/>
</dbReference>
<dbReference type="PROSITE" id="PS00855">
    <property type="entry name" value="SPASE_II"/>
    <property type="match status" value="1"/>
</dbReference>
<keyword id="KW-0064">Aspartyl protease</keyword>
<keyword id="KW-0997">Cell inner membrane</keyword>
<keyword id="KW-1003">Cell membrane</keyword>
<keyword id="KW-0378">Hydrolase</keyword>
<keyword id="KW-0472">Membrane</keyword>
<keyword id="KW-0645">Protease</keyword>
<keyword id="KW-0812">Transmembrane</keyword>
<keyword id="KW-1133">Transmembrane helix</keyword>
<reference key="1">
    <citation type="submission" date="2006-12" db="EMBL/GenBank/DDBJ databases">
        <authorList>
            <person name="Hendrix L."/>
            <person name="Mohamoud Y."/>
            <person name="Radune D."/>
            <person name="Shvartsbeyn A."/>
            <person name="Daugherty S."/>
            <person name="Dodson R."/>
            <person name="Durkin A.S."/>
            <person name="Harkins D."/>
            <person name="Huot H."/>
            <person name="Kothari S.P."/>
            <person name="Madupu R."/>
            <person name="Li J."/>
            <person name="Nelson W.C."/>
            <person name="Shrivastava S."/>
            <person name="Giglio M.G."/>
            <person name="Haft D."/>
            <person name="Selengut J."/>
            <person name="Fraser-Ligget C."/>
            <person name="Seshadri R."/>
        </authorList>
    </citation>
    <scope>NUCLEOTIDE SEQUENCE [LARGE SCALE GENOMIC DNA]</scope>
    <source>
        <strain>ATCC 35685 / KC583 / Herrer 020/F12,63</strain>
    </source>
</reference>
<accession>A1UUG9</accession>
<protein>
    <recommendedName>
        <fullName evidence="1">Lipoprotein signal peptidase</fullName>
        <ecNumber evidence="1">3.4.23.36</ecNumber>
    </recommendedName>
    <alternativeName>
        <fullName evidence="1">Prolipoprotein signal peptidase</fullName>
    </alternativeName>
    <alternativeName>
        <fullName evidence="1">Signal peptidase II</fullName>
        <shortName evidence="1">SPase II</shortName>
    </alternativeName>
</protein>
<gene>
    <name evidence="1" type="primary">lspA</name>
    <name type="ordered locus">BARBAKC583_1375</name>
</gene>
<organism>
    <name type="scientific">Bartonella bacilliformis (strain ATCC 35685 / KC583 / Herrer 020/F12,63)</name>
    <dbReference type="NCBI Taxonomy" id="360095"/>
    <lineage>
        <taxon>Bacteria</taxon>
        <taxon>Pseudomonadati</taxon>
        <taxon>Pseudomonadota</taxon>
        <taxon>Alphaproteobacteria</taxon>
        <taxon>Hyphomicrobiales</taxon>
        <taxon>Bartonellaceae</taxon>
        <taxon>Bartonella</taxon>
    </lineage>
</organism>
<feature type="chain" id="PRO_1000058229" description="Lipoprotein signal peptidase">
    <location>
        <begin position="1"/>
        <end position="165"/>
    </location>
</feature>
<feature type="transmembrane region" description="Helical" evidence="1">
    <location>
        <begin position="7"/>
        <end position="27"/>
    </location>
</feature>
<feature type="transmembrane region" description="Helical" evidence="1">
    <location>
        <begin position="28"/>
        <end position="48"/>
    </location>
</feature>
<feature type="transmembrane region" description="Helical" evidence="1">
    <location>
        <begin position="61"/>
        <end position="81"/>
    </location>
</feature>
<feature type="transmembrane region" description="Helical" evidence="1">
    <location>
        <begin position="87"/>
        <end position="107"/>
    </location>
</feature>
<feature type="transmembrane region" description="Helical" evidence="1">
    <location>
        <begin position="128"/>
        <end position="148"/>
    </location>
</feature>
<feature type="active site" evidence="1">
    <location>
        <position position="117"/>
    </location>
</feature>
<feature type="active site" evidence="1">
    <location>
        <position position="136"/>
    </location>
</feature>
<evidence type="ECO:0000255" key="1">
    <source>
        <dbReference type="HAMAP-Rule" id="MF_00161"/>
    </source>
</evidence>
<comment type="function">
    <text evidence="1">This protein specifically catalyzes the removal of signal peptides from prolipoproteins.</text>
</comment>
<comment type="catalytic activity">
    <reaction evidence="1">
        <text>Release of signal peptides from bacterial membrane prolipoproteins. Hydrolyzes -Xaa-Yaa-Zaa-|-(S,diacylglyceryl)Cys-, in which Xaa is hydrophobic (preferably Leu), and Yaa (Ala or Ser) and Zaa (Gly or Ala) have small, neutral side chains.</text>
        <dbReference type="EC" id="3.4.23.36"/>
    </reaction>
</comment>
<comment type="pathway">
    <text evidence="1">Protein modification; lipoprotein biosynthesis (signal peptide cleavage).</text>
</comment>
<comment type="subcellular location">
    <subcellularLocation>
        <location evidence="1">Cell inner membrane</location>
        <topology evidence="1">Multi-pass membrane protein</topology>
    </subcellularLocation>
</comment>
<comment type="similarity">
    <text evidence="1">Belongs to the peptidase A8 family.</text>
</comment>
<name>LSPA_BARBK</name>
<sequence length="165" mass="18934">MTLKSLFFLLLGLIITVLLDQAIKYWITHTMLLGTEIPLFPFISLYHVRNSGIAFSFFSSFSHWGLIALTITIIVFLFWLWKNTELDKALSRFGIVLIIGGAIGNLIDRIRFQAVTDYILFYIDGVFSFAIFNLADTFITLGAISILIDEFCIWIKTKRHLDKSK</sequence>